<evidence type="ECO:0000250" key="1"/>
<evidence type="ECO:0000255" key="2">
    <source>
        <dbReference type="HAMAP-Rule" id="MF_00523"/>
    </source>
</evidence>
<protein>
    <recommendedName>
        <fullName evidence="2">UDP-3-O-(3-hydroxymyristoyl)glucosamine N-acyltransferase</fullName>
        <shortName evidence="2">UDP-3-O-(3-OHC14)-GlcN N-acyltransferase</shortName>
        <ecNumber evidence="2">2.3.1.191</ecNumber>
    </recommendedName>
    <alternativeName>
        <fullName evidence="2">UDP-3-O-(3-hydroxytetradecanoyl)glucosamine N-acyltransferase</fullName>
    </alternativeName>
</protein>
<comment type="function">
    <text evidence="2">Catalyzes the N-acylation of UDP-3-O-(hydroxytetradecanoyl)glucosamine using 3-hydroxytetradecanoyl-ACP as the acyl donor. Is involved in the biosynthesis of lipid A, a phosphorylated glycolipid that anchors the lipopolysaccharide to the outer membrane of the cell.</text>
</comment>
<comment type="catalytic activity">
    <reaction evidence="2">
        <text>a UDP-3-O-[(3R)-3-hydroxyacyl]-alpha-D-glucosamine + a (3R)-hydroxyacyl-[ACP] = a UDP-2-N,3-O-bis[(3R)-3-hydroxyacyl]-alpha-D-glucosamine + holo-[ACP] + H(+)</text>
        <dbReference type="Rhea" id="RHEA:53836"/>
        <dbReference type="Rhea" id="RHEA-COMP:9685"/>
        <dbReference type="Rhea" id="RHEA-COMP:9945"/>
        <dbReference type="ChEBI" id="CHEBI:15378"/>
        <dbReference type="ChEBI" id="CHEBI:64479"/>
        <dbReference type="ChEBI" id="CHEBI:78827"/>
        <dbReference type="ChEBI" id="CHEBI:137740"/>
        <dbReference type="ChEBI" id="CHEBI:137748"/>
        <dbReference type="EC" id="2.3.1.191"/>
    </reaction>
</comment>
<comment type="catalytic activity">
    <reaction evidence="2">
        <text>UDP-3-O-[(3R)-3-hydroxytetradecanoyl]-alpha-D-glucosamine + (3R)-hydroxytetradecanoyl-[ACP] = UDP-2-N,3-O-bis[(3R)-3-hydroxytetradecanoyl]-alpha-D-glucosamine + holo-[ACP] + H(+)</text>
        <dbReference type="Rhea" id="RHEA:17817"/>
        <dbReference type="Rhea" id="RHEA-COMP:9646"/>
        <dbReference type="Rhea" id="RHEA-COMP:9685"/>
        <dbReference type="ChEBI" id="CHEBI:15378"/>
        <dbReference type="ChEBI" id="CHEBI:64479"/>
        <dbReference type="ChEBI" id="CHEBI:71573"/>
        <dbReference type="ChEBI" id="CHEBI:78474"/>
        <dbReference type="ChEBI" id="CHEBI:78847"/>
    </reaction>
</comment>
<comment type="pathway">
    <text evidence="2">Glycolipid biosynthesis; lipid IV(A) biosynthesis; lipid IV(A) from (3R)-3-hydroxytetradecanoyl-[acyl-carrier-protein] and UDP-N-acetyl-alpha-D-glucosamine: step 3/6.</text>
</comment>
<comment type="subunit">
    <text evidence="2">Homotrimer.</text>
</comment>
<comment type="similarity">
    <text evidence="2">Belongs to the transferase hexapeptide repeat family. LpxD subfamily.</text>
</comment>
<dbReference type="EC" id="2.3.1.191" evidence="2"/>
<dbReference type="EMBL" id="Z25463">
    <property type="protein sequence ID" value="CAA80951.1"/>
    <property type="molecule type" value="Genomic_DNA"/>
</dbReference>
<dbReference type="PIR" id="S41752">
    <property type="entry name" value="S41752"/>
</dbReference>
<dbReference type="SMR" id="P32203"/>
<dbReference type="STRING" id="1443113.LC20_01205"/>
<dbReference type="eggNOG" id="COG1044">
    <property type="taxonomic scope" value="Bacteria"/>
</dbReference>
<dbReference type="BRENDA" id="2.3.1.191">
    <property type="organism ID" value="6741"/>
</dbReference>
<dbReference type="UniPathway" id="UPA00359">
    <property type="reaction ID" value="UER00479"/>
</dbReference>
<dbReference type="GO" id="GO:0016020">
    <property type="term" value="C:membrane"/>
    <property type="evidence" value="ECO:0007669"/>
    <property type="project" value="GOC"/>
</dbReference>
<dbReference type="GO" id="GO:0016410">
    <property type="term" value="F:N-acyltransferase activity"/>
    <property type="evidence" value="ECO:0007669"/>
    <property type="project" value="InterPro"/>
</dbReference>
<dbReference type="GO" id="GO:0103118">
    <property type="term" value="F:UDP-3-O-(R-3-hydroxymyristoyl)-glucosamine N-acyltransferase activity"/>
    <property type="evidence" value="ECO:0007669"/>
    <property type="project" value="UniProtKB-EC"/>
</dbReference>
<dbReference type="GO" id="GO:0009245">
    <property type="term" value="P:lipid A biosynthetic process"/>
    <property type="evidence" value="ECO:0007669"/>
    <property type="project" value="UniProtKB-UniRule"/>
</dbReference>
<dbReference type="CDD" id="cd03352">
    <property type="entry name" value="LbH_LpxD"/>
    <property type="match status" value="1"/>
</dbReference>
<dbReference type="FunFam" id="2.160.10.10:FF:000005">
    <property type="entry name" value="UDP-3-O-(3-hydroxymyristoyl)glucosamine N-acyltransferase"/>
    <property type="match status" value="1"/>
</dbReference>
<dbReference type="Gene3D" id="1.20.5.170">
    <property type="match status" value="1"/>
</dbReference>
<dbReference type="Gene3D" id="2.160.10.10">
    <property type="entry name" value="Hexapeptide repeat proteins"/>
    <property type="match status" value="1"/>
</dbReference>
<dbReference type="Gene3D" id="3.40.1390.10">
    <property type="entry name" value="MurE/MurF, N-terminal domain"/>
    <property type="match status" value="1"/>
</dbReference>
<dbReference type="HAMAP" id="MF_00523">
    <property type="entry name" value="LpxD"/>
    <property type="match status" value="1"/>
</dbReference>
<dbReference type="InterPro" id="IPR001451">
    <property type="entry name" value="Hexapep"/>
</dbReference>
<dbReference type="InterPro" id="IPR018357">
    <property type="entry name" value="Hexapep_transf_CS"/>
</dbReference>
<dbReference type="InterPro" id="IPR007691">
    <property type="entry name" value="LpxD"/>
</dbReference>
<dbReference type="InterPro" id="IPR011004">
    <property type="entry name" value="Trimer_LpxA-like_sf"/>
</dbReference>
<dbReference type="InterPro" id="IPR020573">
    <property type="entry name" value="UDP_GlcNAc_AcTrfase_non-rep"/>
</dbReference>
<dbReference type="NCBIfam" id="TIGR01853">
    <property type="entry name" value="lipid_A_lpxD"/>
    <property type="match status" value="1"/>
</dbReference>
<dbReference type="NCBIfam" id="NF002060">
    <property type="entry name" value="PRK00892.1"/>
    <property type="match status" value="1"/>
</dbReference>
<dbReference type="PANTHER" id="PTHR43378">
    <property type="entry name" value="UDP-3-O-ACYLGLUCOSAMINE N-ACYLTRANSFERASE"/>
    <property type="match status" value="1"/>
</dbReference>
<dbReference type="PANTHER" id="PTHR43378:SF2">
    <property type="entry name" value="UDP-3-O-ACYLGLUCOSAMINE N-ACYLTRANSFERASE 1, MITOCHONDRIAL-RELATED"/>
    <property type="match status" value="1"/>
</dbReference>
<dbReference type="Pfam" id="PF00132">
    <property type="entry name" value="Hexapep"/>
    <property type="match status" value="3"/>
</dbReference>
<dbReference type="Pfam" id="PF04613">
    <property type="entry name" value="LpxD"/>
    <property type="match status" value="1"/>
</dbReference>
<dbReference type="SUPFAM" id="SSF51161">
    <property type="entry name" value="Trimeric LpxA-like enzymes"/>
    <property type="match status" value="1"/>
</dbReference>
<dbReference type="PROSITE" id="PS00101">
    <property type="entry name" value="HEXAPEP_TRANSFERASES"/>
    <property type="match status" value="3"/>
</dbReference>
<feature type="initiator methionine" description="Removed" evidence="1">
    <location>
        <position position="1"/>
    </location>
</feature>
<feature type="chain" id="PRO_0000059716" description="UDP-3-O-(3-hydroxymyristoyl)glucosamine N-acyltransferase">
    <location>
        <begin position="2"/>
        <end position="340"/>
    </location>
</feature>
<feature type="active site" description="Proton acceptor" evidence="2">
    <location>
        <position position="239"/>
    </location>
</feature>
<organism>
    <name type="scientific">Yersinia enterocolitica</name>
    <dbReference type="NCBI Taxonomy" id="630"/>
    <lineage>
        <taxon>Bacteria</taxon>
        <taxon>Pseudomonadati</taxon>
        <taxon>Pseudomonadota</taxon>
        <taxon>Gammaproteobacteria</taxon>
        <taxon>Enterobacterales</taxon>
        <taxon>Yersiniaceae</taxon>
        <taxon>Yersinia</taxon>
    </lineage>
</organism>
<keyword id="KW-0012">Acyltransferase</keyword>
<keyword id="KW-0441">Lipid A biosynthesis</keyword>
<keyword id="KW-0444">Lipid biosynthesis</keyword>
<keyword id="KW-0443">Lipid metabolism</keyword>
<keyword id="KW-0677">Repeat</keyword>
<keyword id="KW-0808">Transferase</keyword>
<proteinExistence type="inferred from homology"/>
<name>LPXD_YEREN</name>
<gene>
    <name evidence="2" type="primary">lpxD</name>
    <name type="synonym">firA</name>
</gene>
<reference key="1">
    <citation type="journal article" date="1994" name="FEBS Lett.">
        <title>The novel hexapeptide motif found in the acyltransferases LpxA and LpxD of lipid A biosynthesis is conserved in various bacteria.</title>
        <authorList>
            <person name="Vuorio R."/>
            <person name="Haerkonen T."/>
            <person name="Tolvanen M."/>
            <person name="Vaara M."/>
        </authorList>
    </citation>
    <scope>NUCLEOTIDE SEQUENCE [GENOMIC DNA]</scope>
    <source>
        <strain>EH902</strain>
    </source>
</reference>
<accession>P32203</accession>
<sequence>MPSIRLADLAQQLDAQVHGDGDLVITGIASMHSAEPSQITFLSNSRYQEQLATCNAGAVVLTEADLPFCKSAALVVKNPYLTYARMAQIMDTTPQPAQNIAPGAVISPQATLGENVSIGANAVIESGVVLGDNVVIGAGCFIGKNTHIGAGSRLWANVSVYHEVVIGQNCLIQSGTVIGADGFGYANDRGNWIKIPQLGSVHIGDRVEIGACTTIDRGALDNTIIGNGVIIDNQCQIAHNVVIGDNTAVAGGVIMAGSLKVGRYCMIGGASVINGHMEICDKVTITGMGMVMRPITEPGLYPSGIPLQPNKVWRKTAALVMNIDGINKRLKAIERKIDKE</sequence>